<proteinExistence type="inferred from homology"/>
<accession>A3M0X0</accession>
<feature type="chain" id="PRO_0000383407" description="L-lactate dehydrogenase">
    <location>
        <begin position="1"/>
        <end position="383"/>
    </location>
</feature>
<feature type="domain" description="FMN hydroxy acid dehydrogenase" evidence="1">
    <location>
        <begin position="1"/>
        <end position="380"/>
    </location>
</feature>
<feature type="active site" description="Proton acceptor" evidence="1">
    <location>
        <position position="275"/>
    </location>
</feature>
<feature type="binding site" evidence="1">
    <location>
        <position position="24"/>
    </location>
    <ligand>
        <name>substrate</name>
    </ligand>
</feature>
<feature type="binding site" evidence="1">
    <location>
        <position position="106"/>
    </location>
    <ligand>
        <name>FMN</name>
        <dbReference type="ChEBI" id="CHEBI:58210"/>
    </ligand>
</feature>
<feature type="binding site" evidence="1">
    <location>
        <position position="127"/>
    </location>
    <ligand>
        <name>FMN</name>
        <dbReference type="ChEBI" id="CHEBI:58210"/>
    </ligand>
</feature>
<feature type="binding site" evidence="1">
    <location>
        <position position="129"/>
    </location>
    <ligand>
        <name>substrate</name>
    </ligand>
</feature>
<feature type="binding site" evidence="1">
    <location>
        <position position="155"/>
    </location>
    <ligand>
        <name>FMN</name>
        <dbReference type="ChEBI" id="CHEBI:58210"/>
    </ligand>
</feature>
<feature type="binding site" evidence="1">
    <location>
        <position position="164"/>
    </location>
    <ligand>
        <name>substrate</name>
    </ligand>
</feature>
<feature type="binding site" evidence="1">
    <location>
        <position position="251"/>
    </location>
    <ligand>
        <name>FMN</name>
        <dbReference type="ChEBI" id="CHEBI:58210"/>
    </ligand>
</feature>
<feature type="binding site" evidence="1">
    <location>
        <position position="278"/>
    </location>
    <ligand>
        <name>substrate</name>
    </ligand>
</feature>
<feature type="binding site" evidence="1">
    <location>
        <begin position="306"/>
        <end position="330"/>
    </location>
    <ligand>
        <name>FMN</name>
        <dbReference type="ChEBI" id="CHEBI:58210"/>
    </ligand>
</feature>
<keyword id="KW-0997">Cell inner membrane</keyword>
<keyword id="KW-1003">Cell membrane</keyword>
<keyword id="KW-0285">Flavoprotein</keyword>
<keyword id="KW-0288">FMN</keyword>
<keyword id="KW-0472">Membrane</keyword>
<keyword id="KW-0560">Oxidoreductase</keyword>
<sequence>MIISSGNDYRAAAQRRLPPFLFHYIDGGAYAEYTLKRNVQDLSEIALRQRVLNDMSALSLETKLFNETLSMPVALAPVGLTGMYARRGEVQAAMAADKKGIPFTLSTVSVCPIEEVAPAINRPMWFQLYVLRDRGFMRNALERAKAAGCSTLVFTVDMPVPGARYRDAHSGMSGPNAAMRRYMQSVFHPHWSWNVGLMGRPHDLGNISKYLGKPTGLEDYIGWLGSNFDPSISWKDLEWIREFWDGPMVIKGILDPEDAKDAVRFGADGIVVSNHGGRQLDGVMSSARALPAIADAVKGDLAILADSGIRNGLDVVRMLALGADTVLLGRAFVYALAAAGGQGVSNLLDLIDKEMRVAMTLTGAKSISDINADCLVQAIKQGL</sequence>
<gene>
    <name evidence="1" type="primary">lldD</name>
    <name type="ordered locus">A1S_0069</name>
</gene>
<comment type="function">
    <text evidence="1">Catalyzes the conversion of L-lactate to pyruvate. Is coupled to the respiratory chain.</text>
</comment>
<comment type="catalytic activity">
    <reaction evidence="1">
        <text>(S)-lactate + A = pyruvate + AH2</text>
        <dbReference type="Rhea" id="RHEA:45816"/>
        <dbReference type="ChEBI" id="CHEBI:13193"/>
        <dbReference type="ChEBI" id="CHEBI:15361"/>
        <dbReference type="ChEBI" id="CHEBI:16651"/>
        <dbReference type="ChEBI" id="CHEBI:17499"/>
    </reaction>
</comment>
<comment type="cofactor">
    <cofactor evidence="1">
        <name>FMN</name>
        <dbReference type="ChEBI" id="CHEBI:58210"/>
    </cofactor>
</comment>
<comment type="subcellular location">
    <subcellularLocation>
        <location evidence="1">Cell inner membrane</location>
        <topology evidence="1">Peripheral membrane protein</topology>
    </subcellularLocation>
</comment>
<comment type="similarity">
    <text evidence="1">Belongs to the FMN-dependent alpha-hydroxy acid dehydrogenase family.</text>
</comment>
<protein>
    <recommendedName>
        <fullName evidence="1">L-lactate dehydrogenase</fullName>
        <ecNumber evidence="1">1.1.-.-</ecNumber>
    </recommendedName>
</protein>
<organism>
    <name type="scientific">Acinetobacter baumannii (strain ATCC 17978 / DSM 105126 / CIP 53.77 / LMG 1025 / NCDC KC755 / 5377)</name>
    <dbReference type="NCBI Taxonomy" id="400667"/>
    <lineage>
        <taxon>Bacteria</taxon>
        <taxon>Pseudomonadati</taxon>
        <taxon>Pseudomonadota</taxon>
        <taxon>Gammaproteobacteria</taxon>
        <taxon>Moraxellales</taxon>
        <taxon>Moraxellaceae</taxon>
        <taxon>Acinetobacter</taxon>
        <taxon>Acinetobacter calcoaceticus/baumannii complex</taxon>
    </lineage>
</organism>
<reference key="1">
    <citation type="journal article" date="2007" name="Genes Dev.">
        <title>New insights into Acinetobacter baumannii pathogenesis revealed by high-density pyrosequencing and transposon mutagenesis.</title>
        <authorList>
            <person name="Smith M.G."/>
            <person name="Gianoulis T.A."/>
            <person name="Pukatzki S."/>
            <person name="Mekalanos J.J."/>
            <person name="Ornston L.N."/>
            <person name="Gerstein M."/>
            <person name="Snyder M."/>
        </authorList>
    </citation>
    <scope>NUCLEOTIDE SEQUENCE [LARGE SCALE GENOMIC DNA]</scope>
    <source>
        <strain>ATCC 17978 / DSM 105126 / CIP 53.77 / LMG 1025 / NCDC KC755 / 5377</strain>
    </source>
</reference>
<name>LLDD_ACIBT</name>
<dbReference type="EC" id="1.1.-.-" evidence="1"/>
<dbReference type="EMBL" id="CP000521">
    <property type="protein sequence ID" value="ABO10564.2"/>
    <property type="molecule type" value="Genomic_DNA"/>
</dbReference>
<dbReference type="RefSeq" id="WP_000587282.1">
    <property type="nucleotide sequence ID" value="NZ_CP053098.1"/>
</dbReference>
<dbReference type="SMR" id="A3M0X0"/>
<dbReference type="GeneID" id="92892082"/>
<dbReference type="KEGG" id="acb:A1S_0069"/>
<dbReference type="HOGENOM" id="CLU_020639_0_0_6"/>
<dbReference type="GO" id="GO:0005886">
    <property type="term" value="C:plasma membrane"/>
    <property type="evidence" value="ECO:0007669"/>
    <property type="project" value="UniProtKB-SubCell"/>
</dbReference>
<dbReference type="GO" id="GO:0010181">
    <property type="term" value="F:FMN binding"/>
    <property type="evidence" value="ECO:0007669"/>
    <property type="project" value="InterPro"/>
</dbReference>
<dbReference type="GO" id="GO:0004459">
    <property type="term" value="F:L-lactate dehydrogenase activity"/>
    <property type="evidence" value="ECO:0007669"/>
    <property type="project" value="UniProtKB-UniRule"/>
</dbReference>
<dbReference type="GO" id="GO:0009060">
    <property type="term" value="P:aerobic respiration"/>
    <property type="evidence" value="ECO:0007669"/>
    <property type="project" value="TreeGrafter"/>
</dbReference>
<dbReference type="GO" id="GO:0006089">
    <property type="term" value="P:lactate metabolic process"/>
    <property type="evidence" value="ECO:0007669"/>
    <property type="project" value="UniProtKB-UniRule"/>
</dbReference>
<dbReference type="CDD" id="cd02809">
    <property type="entry name" value="alpha_hydroxyacid_oxid_FMN"/>
    <property type="match status" value="1"/>
</dbReference>
<dbReference type="FunFam" id="3.20.20.70:FF:000029">
    <property type="entry name" value="L-lactate dehydrogenase"/>
    <property type="match status" value="1"/>
</dbReference>
<dbReference type="Gene3D" id="3.20.20.70">
    <property type="entry name" value="Aldolase class I"/>
    <property type="match status" value="1"/>
</dbReference>
<dbReference type="HAMAP" id="MF_01559">
    <property type="entry name" value="L_lact_dehydr"/>
    <property type="match status" value="1"/>
</dbReference>
<dbReference type="InterPro" id="IPR013785">
    <property type="entry name" value="Aldolase_TIM"/>
</dbReference>
<dbReference type="InterPro" id="IPR012133">
    <property type="entry name" value="Alpha-hydoxy_acid_DH_FMN"/>
</dbReference>
<dbReference type="InterPro" id="IPR000262">
    <property type="entry name" value="FMN-dep_DH"/>
</dbReference>
<dbReference type="InterPro" id="IPR037396">
    <property type="entry name" value="FMN_HAD"/>
</dbReference>
<dbReference type="InterPro" id="IPR008259">
    <property type="entry name" value="FMN_hydac_DH_AS"/>
</dbReference>
<dbReference type="InterPro" id="IPR020920">
    <property type="entry name" value="LldD"/>
</dbReference>
<dbReference type="NCBIfam" id="NF033901">
    <property type="entry name" value="L_lactate_LldD"/>
    <property type="match status" value="1"/>
</dbReference>
<dbReference type="NCBIfam" id="NF008398">
    <property type="entry name" value="PRK11197.1"/>
    <property type="match status" value="1"/>
</dbReference>
<dbReference type="PANTHER" id="PTHR10578:SF85">
    <property type="entry name" value="L-LACTATE DEHYDROGENASE"/>
    <property type="match status" value="1"/>
</dbReference>
<dbReference type="PANTHER" id="PTHR10578">
    <property type="entry name" value="S -2-HYDROXY-ACID OXIDASE-RELATED"/>
    <property type="match status" value="1"/>
</dbReference>
<dbReference type="Pfam" id="PF01070">
    <property type="entry name" value="FMN_dh"/>
    <property type="match status" value="1"/>
</dbReference>
<dbReference type="PIRSF" id="PIRSF000138">
    <property type="entry name" value="Al-hdrx_acd_dh"/>
    <property type="match status" value="1"/>
</dbReference>
<dbReference type="SUPFAM" id="SSF51395">
    <property type="entry name" value="FMN-linked oxidoreductases"/>
    <property type="match status" value="1"/>
</dbReference>
<dbReference type="PROSITE" id="PS00557">
    <property type="entry name" value="FMN_HYDROXY_ACID_DH_1"/>
    <property type="match status" value="1"/>
</dbReference>
<dbReference type="PROSITE" id="PS51349">
    <property type="entry name" value="FMN_HYDROXY_ACID_DH_2"/>
    <property type="match status" value="1"/>
</dbReference>
<evidence type="ECO:0000255" key="1">
    <source>
        <dbReference type="HAMAP-Rule" id="MF_01559"/>
    </source>
</evidence>